<organism>
    <name type="scientific">Lithobates palustris</name>
    <name type="common">Pickerel frog</name>
    <name type="synonym">Rana palustris</name>
    <dbReference type="NCBI Taxonomy" id="298395"/>
    <lineage>
        <taxon>Eukaryota</taxon>
        <taxon>Metazoa</taxon>
        <taxon>Chordata</taxon>
        <taxon>Craniata</taxon>
        <taxon>Vertebrata</taxon>
        <taxon>Euteleostomi</taxon>
        <taxon>Amphibia</taxon>
        <taxon>Batrachia</taxon>
        <taxon>Anura</taxon>
        <taxon>Neobatrachia</taxon>
        <taxon>Ranoidea</taxon>
        <taxon>Ranidae</taxon>
        <taxon>Lithobates</taxon>
    </lineage>
</organism>
<protein>
    <recommendedName>
        <fullName>Palustrin-3b</fullName>
    </recommendedName>
</protein>
<name>PA3B_LITPA</name>
<accession>P84262</accession>
<keyword id="KW-0878">Amphibian defense peptide</keyword>
<keyword id="KW-0044">Antibiotic</keyword>
<keyword id="KW-0929">Antimicrobial</keyword>
<keyword id="KW-0903">Direct protein sequencing</keyword>
<keyword id="KW-1015">Disulfide bond</keyword>
<keyword id="KW-0964">Secreted</keyword>
<comment type="function">
    <text evidence="2">Antimicrobial activity against Gram-negative bacterium E.coli.</text>
</comment>
<comment type="subcellular location">
    <subcellularLocation>
        <location evidence="2">Secreted</location>
    </subcellularLocation>
</comment>
<comment type="tissue specificity">
    <text evidence="2">Expressed by the skin glands.</text>
</comment>
<comment type="mass spectrometry" mass="4904.9" error="1.0" method="Electrospray" evidence="2"/>
<comment type="similarity">
    <text evidence="2">Belongs to the frog skin active peptide (FSAP) family. Brevinin subfamily.</text>
</comment>
<sequence length="48" mass="4907">GIFPKIIGKGIKTGIVNGIKSLVKGVGMKVFKAGLSNIGNTGCNEDEC</sequence>
<proteinExistence type="evidence at protein level"/>
<evidence type="ECO:0000250" key="1">
    <source>
        <dbReference type="UniProtKB" id="P82875"/>
    </source>
</evidence>
<evidence type="ECO:0000269" key="2">
    <source>
    </source>
</evidence>
<evidence type="ECO:0000305" key="3"/>
<feature type="chain" id="PRO_0000190095" description="Palustrin-3b">
    <location>
        <begin position="1"/>
        <end position="48"/>
    </location>
</feature>
<feature type="disulfide bond" evidence="1">
    <location>
        <begin position="43"/>
        <end position="48"/>
    </location>
</feature>
<reference evidence="3" key="1">
    <citation type="journal article" date="2000" name="Biochim. Biophys. Acta">
        <title>Multiple antimicrobial peptides and peptides related to bradykinin and neuromedin N isolated from skin secretions of the pickerel frog, Rana palustris.</title>
        <authorList>
            <person name="Basir Y.J."/>
            <person name="Knoop F.C."/>
            <person name="Dulka J."/>
            <person name="Conlon J.M."/>
        </authorList>
    </citation>
    <scope>PROTEIN SEQUENCE</scope>
    <scope>FUNCTION</scope>
    <scope>SUBCELLULAR LOCATION</scope>
    <scope>TISSUE SPECIFICITY</scope>
    <scope>MASS SPECTROMETRY</scope>
    <source>
        <tissue evidence="2">Skin secretion</tissue>
    </source>
</reference>
<dbReference type="GO" id="GO:0005576">
    <property type="term" value="C:extracellular region"/>
    <property type="evidence" value="ECO:0000314"/>
    <property type="project" value="UniProtKB"/>
</dbReference>
<dbReference type="GO" id="GO:0050829">
    <property type="term" value="P:defense response to Gram-negative bacterium"/>
    <property type="evidence" value="ECO:0000314"/>
    <property type="project" value="UniProtKB"/>
</dbReference>